<evidence type="ECO:0000305" key="1"/>
<evidence type="ECO:0000305" key="2">
    <source>
    </source>
</evidence>
<gene>
    <name type="primary">modD</name>
    <name type="synonym">molX</name>
</gene>
<comment type="similarity">
    <text evidence="1">Belongs to the NadC/ModD family.</text>
</comment>
<comment type="caution">
    <text evidence="2">Was originally thought to be involved in molybdate transport.</text>
</comment>
<name>MODD_RHOCA</name>
<organism>
    <name type="scientific">Rhodobacter capsulatus</name>
    <name type="common">Rhodopseudomonas capsulata</name>
    <dbReference type="NCBI Taxonomy" id="1061"/>
    <lineage>
        <taxon>Bacteria</taxon>
        <taxon>Pseudomonadati</taxon>
        <taxon>Pseudomonadota</taxon>
        <taxon>Alphaproteobacteria</taxon>
        <taxon>Rhodobacterales</taxon>
        <taxon>Rhodobacter group</taxon>
        <taxon>Rhodobacter</taxon>
    </lineage>
</organism>
<dbReference type="EC" id="2.4.2.-"/>
<dbReference type="EMBL" id="L06254">
    <property type="protein sequence ID" value="AAA71908.1"/>
    <property type="molecule type" value="Unassigned_DNA"/>
</dbReference>
<dbReference type="PIR" id="B36914">
    <property type="entry name" value="B36914"/>
</dbReference>
<dbReference type="SMR" id="Q08384"/>
<dbReference type="GO" id="GO:0005737">
    <property type="term" value="C:cytoplasm"/>
    <property type="evidence" value="ECO:0007669"/>
    <property type="project" value="TreeGrafter"/>
</dbReference>
<dbReference type="GO" id="GO:0004514">
    <property type="term" value="F:nicotinate-nucleotide diphosphorylase (carboxylating) activity"/>
    <property type="evidence" value="ECO:0007669"/>
    <property type="project" value="InterPro"/>
</dbReference>
<dbReference type="GO" id="GO:0009435">
    <property type="term" value="P:NAD biosynthetic process"/>
    <property type="evidence" value="ECO:0007669"/>
    <property type="project" value="InterPro"/>
</dbReference>
<dbReference type="GO" id="GO:0034213">
    <property type="term" value="P:quinolinate catabolic process"/>
    <property type="evidence" value="ECO:0007669"/>
    <property type="project" value="TreeGrafter"/>
</dbReference>
<dbReference type="FunFam" id="3.20.20.70:FF:000030">
    <property type="entry name" value="Nicotinate-nucleotide pyrophosphorylase, carboxylating"/>
    <property type="match status" value="1"/>
</dbReference>
<dbReference type="Gene3D" id="3.20.20.70">
    <property type="entry name" value="Aldolase class I"/>
    <property type="match status" value="1"/>
</dbReference>
<dbReference type="Gene3D" id="3.90.1170.20">
    <property type="entry name" value="Quinolinate phosphoribosyl transferase, N-terminal domain"/>
    <property type="match status" value="1"/>
</dbReference>
<dbReference type="InterPro" id="IPR013785">
    <property type="entry name" value="Aldolase_TIM"/>
</dbReference>
<dbReference type="InterPro" id="IPR006242">
    <property type="entry name" value="ModD"/>
</dbReference>
<dbReference type="InterPro" id="IPR027277">
    <property type="entry name" value="NadC/ModD"/>
</dbReference>
<dbReference type="InterPro" id="IPR036068">
    <property type="entry name" value="Nicotinate_pribotase-like_C"/>
</dbReference>
<dbReference type="InterPro" id="IPR037128">
    <property type="entry name" value="Quinolinate_PRibosylTase_N_sf"/>
</dbReference>
<dbReference type="InterPro" id="IPR002638">
    <property type="entry name" value="Quinolinate_PRibosylTrfase_C"/>
</dbReference>
<dbReference type="InterPro" id="IPR022412">
    <property type="entry name" value="Quinolinate_PRibosylTrfase_N"/>
</dbReference>
<dbReference type="NCBIfam" id="TIGR01334">
    <property type="entry name" value="modD"/>
    <property type="match status" value="1"/>
</dbReference>
<dbReference type="PANTHER" id="PTHR32179">
    <property type="entry name" value="NICOTINATE-NUCLEOTIDE PYROPHOSPHORYLASE [CARBOXYLATING]"/>
    <property type="match status" value="1"/>
</dbReference>
<dbReference type="PANTHER" id="PTHR32179:SF4">
    <property type="entry name" value="PYROPHOSPHORYLASE MODD-RELATED"/>
    <property type="match status" value="1"/>
</dbReference>
<dbReference type="Pfam" id="PF01729">
    <property type="entry name" value="QRPTase_C"/>
    <property type="match status" value="1"/>
</dbReference>
<dbReference type="Pfam" id="PF02749">
    <property type="entry name" value="QRPTase_N"/>
    <property type="match status" value="1"/>
</dbReference>
<dbReference type="PIRSF" id="PIRSF006250">
    <property type="entry name" value="NadC_ModD"/>
    <property type="match status" value="1"/>
</dbReference>
<dbReference type="SUPFAM" id="SSF51690">
    <property type="entry name" value="Nicotinate/Quinolinate PRTase C-terminal domain-like"/>
    <property type="match status" value="1"/>
</dbReference>
<dbReference type="SUPFAM" id="SSF54675">
    <property type="entry name" value="Nicotinate/Quinolinate PRTase N-terminal domain-like"/>
    <property type="match status" value="1"/>
</dbReference>
<accession>Q08384</accession>
<feature type="chain" id="PRO_0000155962" description="Putative pyrophosphorylase ModD">
    <location>
        <begin position="1"/>
        <end position="259"/>
    </location>
</feature>
<reference key="1">
    <citation type="journal article" date="1993" name="J. Bacteriol.">
        <title>Characterization of Rhodobacter capsulatus genes encoding a molybdenum transport system and putative molybdenum-pterin-binding proteins.</title>
        <authorList>
            <person name="Wang G."/>
            <person name="Angermueller S."/>
            <person name="Klipp W."/>
        </authorList>
    </citation>
    <scope>NUCLEOTIDE SEQUENCE [GENOMIC DNA]</scope>
    <source>
        <strain>ATCC 33303 / B10</strain>
    </source>
</reference>
<protein>
    <recommendedName>
        <fullName>Putative pyrophosphorylase ModD</fullName>
        <ecNumber>2.4.2.-</ecNumber>
    </recommendedName>
</protein>
<keyword id="KW-0328">Glycosyltransferase</keyword>
<keyword id="KW-0808">Transferase</keyword>
<sequence length="259" mass="26782">MFLIDDTALMALIREDVPAGDLTTRSLGLAAEAGELTMRARGAMTVACSEEAVRILQLLGAEAWIATASGRQVEGGEMLLFARGQVEALLAGWKVAQNLIEWASGLASSATAIVAAARAVNPAVTVACTRKSVPGTRALSLRAVTVGGATVHRTGLSDSVLLFAEHRAFGGADALAAQIARLRASCPERKVVVEVADVAEALAAAQAGAEVLQLEKFPPEQVAAVVAGLGPDWRGHVAAAGGITAANAAPMRRRGRRFW</sequence>
<proteinExistence type="inferred from homology"/>